<evidence type="ECO:0000250" key="1">
    <source>
        <dbReference type="UniProtKB" id="P22315"/>
    </source>
</evidence>
<evidence type="ECO:0000250" key="2">
    <source>
        <dbReference type="UniProtKB" id="P22830"/>
    </source>
</evidence>
<evidence type="ECO:0000255" key="3"/>
<evidence type="ECO:0000269" key="4">
    <source>
    </source>
</evidence>
<evidence type="ECO:0000305" key="5"/>
<accession>O42479</accession>
<name>HEMH_CHICK</name>
<keyword id="KW-0001">2Fe-2S</keyword>
<keyword id="KW-0350">Heme biosynthesis</keyword>
<keyword id="KW-0408">Iron</keyword>
<keyword id="KW-0411">Iron-sulfur</keyword>
<keyword id="KW-0456">Lyase</keyword>
<keyword id="KW-0472">Membrane</keyword>
<keyword id="KW-0479">Metal-binding</keyword>
<keyword id="KW-0496">Mitochondrion</keyword>
<keyword id="KW-0999">Mitochondrion inner membrane</keyword>
<keyword id="KW-0627">Porphyrin biosynthesis</keyword>
<keyword id="KW-1185">Reference proteome</keyword>
<keyword id="KW-0809">Transit peptide</keyword>
<protein>
    <recommendedName>
        <fullName evidence="2">Ferrochelatase, mitochondrial</fullName>
        <ecNumber evidence="4">4.98.1.1</ecNumber>
    </recommendedName>
    <alternativeName>
        <fullName>Heme synthase</fullName>
    </alternativeName>
    <alternativeName>
        <fullName>Protoheme ferro-lyase</fullName>
    </alternativeName>
</protein>
<reference key="1">
    <citation type="journal article" date="1998" name="Arch. Biochem. Biophys.">
        <title>Cloning and characterization of Gallus and Xenopus ferrochelatases: presence of the [2Fe-2S] cluster in nonmammalian ferrochelatase.</title>
        <authorList>
            <person name="Day A.L."/>
            <person name="Parsons B.M."/>
            <person name="Dailey H.A."/>
        </authorList>
    </citation>
    <scope>NUCLEOTIDE SEQUENCE [MRNA]</scope>
    <scope>FUNCTION</scope>
    <scope>CATALYTIC ACTIVITY</scope>
    <scope>BIOPHYSICOCHEMICAL PROPERTIES</scope>
    <scope>PATHWAY</scope>
    <source>
        <strain>White leghorn</strain>
    </source>
</reference>
<comment type="function">
    <text evidence="4">Catalyzes the ferrous insertion into protoporphyrin IX.</text>
</comment>
<comment type="catalytic activity">
    <reaction evidence="4">
        <text>heme b + 2 H(+) = protoporphyrin IX + Fe(2+)</text>
        <dbReference type="Rhea" id="RHEA:22584"/>
        <dbReference type="ChEBI" id="CHEBI:15378"/>
        <dbReference type="ChEBI" id="CHEBI:29033"/>
        <dbReference type="ChEBI" id="CHEBI:57306"/>
        <dbReference type="ChEBI" id="CHEBI:60344"/>
        <dbReference type="EC" id="4.98.1.1"/>
    </reaction>
    <physiologicalReaction direction="right-to-left" evidence="4">
        <dbReference type="Rhea" id="RHEA:22586"/>
    </physiologicalReaction>
</comment>
<comment type="cofactor">
    <cofactor evidence="2">
        <name>[2Fe-2S] cluster</name>
        <dbReference type="ChEBI" id="CHEBI:190135"/>
    </cofactor>
    <text evidence="2">Binds 1 [2Fe-2S] cluster.</text>
</comment>
<comment type="biophysicochemical properties">
    <kinetics>
        <KM evidence="4">33 uM for Fe(2+)</KM>
        <KM evidence="4">5.9 uM for protoporphyrin</KM>
    </kinetics>
</comment>
<comment type="pathway">
    <text evidence="4">Porphyrin-containing compound metabolism; protoheme biosynthesis; protoheme from protoporphyrin-IX: step 1/1.</text>
</comment>
<comment type="subunit">
    <text evidence="2">Homodimer. Homotetramer.</text>
</comment>
<comment type="subcellular location">
    <subcellularLocation>
        <location evidence="1">Mitochondrion inner membrane</location>
        <topology evidence="1">Peripheral membrane protein</topology>
        <orientation evidence="1">Matrix side</orientation>
    </subcellularLocation>
</comment>
<comment type="similarity">
    <text evidence="5">Belongs to the ferrochelatase family.</text>
</comment>
<dbReference type="EC" id="4.98.1.1" evidence="4"/>
<dbReference type="EMBL" id="U68033">
    <property type="protein sequence ID" value="AAB66503.1"/>
    <property type="molecule type" value="mRNA"/>
</dbReference>
<dbReference type="RefSeq" id="NP_989527.1">
    <property type="nucleotide sequence ID" value="NM_204196.1"/>
</dbReference>
<dbReference type="SMR" id="O42479"/>
<dbReference type="FunCoup" id="O42479">
    <property type="interactions" value="2312"/>
</dbReference>
<dbReference type="STRING" id="9031.ENSGALP00000043525"/>
<dbReference type="PaxDb" id="9031-ENSGALP00000004832"/>
<dbReference type="GeneID" id="374020"/>
<dbReference type="KEGG" id="gga:374020"/>
<dbReference type="CTD" id="2235"/>
<dbReference type="VEuPathDB" id="HostDB:geneid_374020"/>
<dbReference type="eggNOG" id="KOG1321">
    <property type="taxonomic scope" value="Eukaryota"/>
</dbReference>
<dbReference type="InParanoid" id="O42479"/>
<dbReference type="OrthoDB" id="1323at2759"/>
<dbReference type="PhylomeDB" id="O42479"/>
<dbReference type="BRENDA" id="4.99.1.1">
    <property type="organism ID" value="1306"/>
</dbReference>
<dbReference type="Reactome" id="R-GGA-421984">
    <property type="pathway name" value="Heme synthesis"/>
</dbReference>
<dbReference type="SABIO-RK" id="O42479"/>
<dbReference type="UniPathway" id="UPA00252">
    <property type="reaction ID" value="UER00325"/>
</dbReference>
<dbReference type="PRO" id="PR:O42479"/>
<dbReference type="Proteomes" id="UP000000539">
    <property type="component" value="Unassembled WGS sequence"/>
</dbReference>
<dbReference type="GO" id="GO:0005743">
    <property type="term" value="C:mitochondrial inner membrane"/>
    <property type="evidence" value="ECO:0000250"/>
    <property type="project" value="UniProtKB"/>
</dbReference>
<dbReference type="GO" id="GO:0005759">
    <property type="term" value="C:mitochondrial matrix"/>
    <property type="evidence" value="ECO:0000304"/>
    <property type="project" value="Reactome"/>
</dbReference>
<dbReference type="GO" id="GO:0005739">
    <property type="term" value="C:mitochondrion"/>
    <property type="evidence" value="ECO:0000318"/>
    <property type="project" value="GO_Central"/>
</dbReference>
<dbReference type="GO" id="GO:0051537">
    <property type="term" value="F:2 iron, 2 sulfur cluster binding"/>
    <property type="evidence" value="ECO:0007669"/>
    <property type="project" value="UniProtKB-KW"/>
</dbReference>
<dbReference type="GO" id="GO:0004325">
    <property type="term" value="F:ferrochelatase activity"/>
    <property type="evidence" value="ECO:0000250"/>
    <property type="project" value="UniProtKB"/>
</dbReference>
<dbReference type="GO" id="GO:0046872">
    <property type="term" value="F:metal ion binding"/>
    <property type="evidence" value="ECO:0007669"/>
    <property type="project" value="UniProtKB-KW"/>
</dbReference>
<dbReference type="GO" id="GO:0006783">
    <property type="term" value="P:heme biosynthetic process"/>
    <property type="evidence" value="ECO:0000250"/>
    <property type="project" value="UniProtKB"/>
</dbReference>
<dbReference type="CDD" id="cd00419">
    <property type="entry name" value="Ferrochelatase_C"/>
    <property type="match status" value="1"/>
</dbReference>
<dbReference type="CDD" id="cd03411">
    <property type="entry name" value="Ferrochelatase_N"/>
    <property type="match status" value="1"/>
</dbReference>
<dbReference type="FunFam" id="3.40.50.1400:FF:000003">
    <property type="entry name" value="Ferrochelatase"/>
    <property type="match status" value="1"/>
</dbReference>
<dbReference type="Gene3D" id="3.40.50.1400">
    <property type="match status" value="2"/>
</dbReference>
<dbReference type="HAMAP" id="MF_00323">
    <property type="entry name" value="Ferrochelatase"/>
    <property type="match status" value="1"/>
</dbReference>
<dbReference type="InterPro" id="IPR001015">
    <property type="entry name" value="Ferrochelatase"/>
</dbReference>
<dbReference type="InterPro" id="IPR019772">
    <property type="entry name" value="Ferrochelatase_AS"/>
</dbReference>
<dbReference type="InterPro" id="IPR033644">
    <property type="entry name" value="Ferrochelatase_C"/>
</dbReference>
<dbReference type="InterPro" id="IPR033659">
    <property type="entry name" value="Ferrochelatase_N"/>
</dbReference>
<dbReference type="NCBIfam" id="TIGR00109">
    <property type="entry name" value="hemH"/>
    <property type="match status" value="1"/>
</dbReference>
<dbReference type="PANTHER" id="PTHR11108">
    <property type="entry name" value="FERROCHELATASE"/>
    <property type="match status" value="1"/>
</dbReference>
<dbReference type="PANTHER" id="PTHR11108:SF1">
    <property type="entry name" value="FERROCHELATASE, MITOCHONDRIAL"/>
    <property type="match status" value="1"/>
</dbReference>
<dbReference type="Pfam" id="PF00762">
    <property type="entry name" value="Ferrochelatase"/>
    <property type="match status" value="1"/>
</dbReference>
<dbReference type="SUPFAM" id="SSF53800">
    <property type="entry name" value="Chelatase"/>
    <property type="match status" value="1"/>
</dbReference>
<dbReference type="PROSITE" id="PS00534">
    <property type="entry name" value="FERROCHELATASE"/>
    <property type="match status" value="1"/>
</dbReference>
<gene>
    <name evidence="2" type="primary">FECH</name>
</gene>
<feature type="transit peptide" description="Mitochondrion" evidence="3">
    <location>
        <begin position="1"/>
        <end position="33"/>
    </location>
</feature>
<feature type="chain" id="PRO_0000008875" description="Ferrochelatase, mitochondrial">
    <location>
        <begin position="34"/>
        <end position="402"/>
    </location>
</feature>
<feature type="active site" evidence="2">
    <location>
        <position position="209"/>
    </location>
</feature>
<feature type="active site" evidence="2">
    <location>
        <position position="362"/>
    </location>
</feature>
<feature type="binding site" evidence="2">
    <location>
        <position position="94"/>
    </location>
    <ligand>
        <name>protoporphyrin IX</name>
        <dbReference type="ChEBI" id="CHEBI:57306"/>
    </ligand>
</feature>
<feature type="binding site" evidence="2">
    <location>
        <position position="102"/>
    </location>
    <ligand>
        <name>protoporphyrin IX</name>
        <dbReference type="ChEBI" id="CHEBI:57306"/>
    </ligand>
</feature>
<feature type="binding site" evidence="2">
    <location>
        <position position="109"/>
    </location>
    <ligand>
        <name>protoporphyrin IX</name>
        <dbReference type="ChEBI" id="CHEBI:57306"/>
    </ligand>
</feature>
<feature type="binding site" evidence="2">
    <location>
        <position position="175"/>
    </location>
    <ligand>
        <name>[2Fe-2S] cluster</name>
        <dbReference type="ChEBI" id="CHEBI:190135"/>
    </ligand>
</feature>
<feature type="binding site" evidence="2">
    <location>
        <position position="382"/>
    </location>
    <ligand>
        <name>[2Fe-2S] cluster</name>
        <dbReference type="ChEBI" id="CHEBI:190135"/>
    </ligand>
</feature>
<feature type="binding site" evidence="2">
    <location>
        <position position="385"/>
    </location>
    <ligand>
        <name>[2Fe-2S] cluster</name>
        <dbReference type="ChEBI" id="CHEBI:190135"/>
    </ligand>
</feature>
<feature type="binding site" evidence="2">
    <location>
        <position position="390"/>
    </location>
    <ligand>
        <name>[2Fe-2S] cluster</name>
        <dbReference type="ChEBI" id="CHEBI:190135"/>
    </ligand>
</feature>
<organism>
    <name type="scientific">Gallus gallus</name>
    <name type="common">Chicken</name>
    <dbReference type="NCBI Taxonomy" id="9031"/>
    <lineage>
        <taxon>Eukaryota</taxon>
        <taxon>Metazoa</taxon>
        <taxon>Chordata</taxon>
        <taxon>Craniata</taxon>
        <taxon>Vertebrata</taxon>
        <taxon>Euteleostomi</taxon>
        <taxon>Archelosauria</taxon>
        <taxon>Archosauria</taxon>
        <taxon>Dinosauria</taxon>
        <taxon>Saurischia</taxon>
        <taxon>Theropoda</taxon>
        <taxon>Coelurosauria</taxon>
        <taxon>Aves</taxon>
        <taxon>Neognathae</taxon>
        <taxon>Galloanserae</taxon>
        <taxon>Galliformes</taxon>
        <taxon>Phasianidae</taxon>
        <taxon>Phasianinae</taxon>
        <taxon>Gallus</taxon>
    </lineage>
</organism>
<sequence length="402" mass="45430">MAAAGRAARPLVAGGRQLRVPLRWRGQVAAAAPSTKPQAEPETRKPKTGILMLNMGGPERLDDVHDFLLRLFLDRDLMTLPAQNKLAPFIAKRRTPRIQEQYSRIGGGSPIKKWTAVQGEGMVKLLDSMSPQTAPHKYYIGFRYVHPLTEEAIEEMEDDGIERAIAFTQYPQYSCSTTGSSLNAIYRYYNKKGKKPKMKWSIIDRWPTHPLLIQCFADHIQKELDLFPPDKRKDVVILFSAHSLPMSVVNRGDPYPQEVGATVQRVMEKLNHSNPYRLVWQSKVGPMPWLVPQTDETIKGLCQRGKKNMLLVPIAFTSDHIETLYELDIEYAQVLANECGVENIRRAESLNGNPLFSKALADLVCSHIQSNEICSKQLTLCCPLCVNPVCRETKAFFTNQQL</sequence>
<proteinExistence type="evidence at protein level"/>